<name>GPGS_METBU</name>
<gene>
    <name evidence="3" type="primary">gpgS</name>
    <name type="ordered locus">Mbur_0737</name>
</gene>
<feature type="chain" id="PRO_0000420167" description="Glucosyl-3-phosphoglycerate synthase">
    <location>
        <begin position="1"/>
        <end position="404"/>
    </location>
</feature>
<feature type="binding site" evidence="1">
    <location>
        <position position="146"/>
    </location>
    <ligand>
        <name>a divalent metal cation</name>
        <dbReference type="ChEBI" id="CHEBI:60240"/>
    </ligand>
</feature>
<feature type="binding site" evidence="1">
    <location>
        <begin position="188"/>
        <end position="190"/>
    </location>
    <ligand>
        <name>(2R)-3-phosphoglycerate</name>
        <dbReference type="ChEBI" id="CHEBI:58272"/>
    </ligand>
</feature>
<feature type="binding site" evidence="1">
    <location>
        <position position="270"/>
    </location>
    <ligand>
        <name>a divalent metal cation</name>
        <dbReference type="ChEBI" id="CHEBI:60240"/>
    </ligand>
</feature>
<organism>
    <name type="scientific">Methanococcoides burtonii (strain DSM 6242 / NBRC 107633 / OCM 468 / ACE-M)</name>
    <dbReference type="NCBI Taxonomy" id="259564"/>
    <lineage>
        <taxon>Archaea</taxon>
        <taxon>Methanobacteriati</taxon>
        <taxon>Methanobacteriota</taxon>
        <taxon>Stenosarchaea group</taxon>
        <taxon>Methanomicrobia</taxon>
        <taxon>Methanosarcinales</taxon>
        <taxon>Methanosarcinaceae</taxon>
        <taxon>Methanococcoides</taxon>
    </lineage>
</organism>
<accession>Q12XX4</accession>
<keyword id="KW-0170">Cobalt</keyword>
<keyword id="KW-0328">Glycosyltransferase</keyword>
<keyword id="KW-0460">Magnesium</keyword>
<keyword id="KW-0464">Manganese</keyword>
<keyword id="KW-0479">Metal-binding</keyword>
<keyword id="KW-0533">Nickel</keyword>
<keyword id="KW-0808">Transferase</keyword>
<protein>
    <recommendedName>
        <fullName evidence="3">Glucosyl-3-phosphoglycerate synthase</fullName>
        <shortName evidence="4">GpgS</shortName>
        <ecNumber evidence="2">2.4.1.266</ecNumber>
    </recommendedName>
</protein>
<reference key="1">
    <citation type="journal article" date="2009" name="ISME J.">
        <title>The genome sequence of the psychrophilic archaeon, Methanococcoides burtonii: the role of genome evolution in cold adaptation.</title>
        <authorList>
            <person name="Allen M.A."/>
            <person name="Lauro F.M."/>
            <person name="Williams T.J."/>
            <person name="Burg D."/>
            <person name="Siddiqui K.S."/>
            <person name="De Francisci D."/>
            <person name="Chong K.W."/>
            <person name="Pilak O."/>
            <person name="Chew H.H."/>
            <person name="De Maere M.Z."/>
            <person name="Ting L."/>
            <person name="Katrib M."/>
            <person name="Ng C."/>
            <person name="Sowers K.R."/>
            <person name="Galperin M.Y."/>
            <person name="Anderson I.J."/>
            <person name="Ivanova N."/>
            <person name="Dalin E."/>
            <person name="Martinez M."/>
            <person name="Lapidus A."/>
            <person name="Hauser L."/>
            <person name="Land M."/>
            <person name="Thomas T."/>
            <person name="Cavicchioli R."/>
        </authorList>
    </citation>
    <scope>NUCLEOTIDE SEQUENCE [LARGE SCALE GENOMIC DNA]</scope>
    <source>
        <strain>DSM 6242 / NBRC 107633 / OCM 468 / ACE-M</strain>
    </source>
</reference>
<reference key="2">
    <citation type="journal article" date="2006" name="J. Bacteriol.">
        <title>Characterization of the biosynthetic pathway of glucosylglycerate in the archaeon Methanococcoides burtonii.</title>
        <authorList>
            <person name="Costa J."/>
            <person name="Empadinhas N."/>
            <person name="Goncalves L."/>
            <person name="Lamosa P."/>
            <person name="Santos H."/>
            <person name="da Costa M.S."/>
        </authorList>
    </citation>
    <scope>FUNCTION</scope>
    <scope>CATALYTIC ACTIVITY</scope>
    <scope>BIOPHYSICOCHEMICAL PROPERTIES</scope>
    <scope>COFACTOR</scope>
    <scope>SUBSTRATE SPECIFICITY</scope>
</reference>
<sequence length="404" mass="46878">MDFYQEYITTIHDFCIDKEQLVKRIEGLKVSRPASLIIPILYKEVENPPLKKIITDLNECTYLSQVVIALAAETTEQYVHVVEYFKDLKLPHIVVWCDGPRIKQIIFDMKKKGIDLTSFKGKGKDVWIATGIATLESYAIAYHDADIVTYSVDLPAKLLYPIVETELNFFFNKGYYARINLDSMTMHGRVFRLFVRPLLDTLQSESNADILRYFLAFRYTLAGEFAMTSDLAMNIRIPADWGLEVGLLAEVYRNATTKKICQIDLGYYDHKHQELGVNRSEGLCKMVSDIFTTFMRVVTESTDNRISESYLHGIHVRYKRLGQDLIRRYHADALCNGLYYNRHEEEIYVDMFARVIRKAGDDYRHDPSDVLMPDWTRALSAVPDLREKLYEACIADVKEYCEKK</sequence>
<comment type="function">
    <text evidence="2">Involved in the biosynthesis of 6-O-methylglucose lipopolysaccarides (MGLPs). Catalyzes the transfer of a glucose (Glc) moiety from uridine diphosphate (UDP-Glc) to the position 2 of 3-phospho-D-glycerate (3-PGA) to form glucosyl-3-phosphoglycerate (GPG).</text>
</comment>
<comment type="catalytic activity">
    <reaction evidence="2">
        <text>an NDP-alpha-D-glucose + (2R)-3-phosphoglycerate = (2R)-2-O-(alpha-D-glucopyranosyl)-3-phospho-glycerate + a ribonucleoside 5'-diphosphate + H(+)</text>
        <dbReference type="Rhea" id="RHEA:47244"/>
        <dbReference type="ChEBI" id="CHEBI:15378"/>
        <dbReference type="ChEBI" id="CHEBI:57930"/>
        <dbReference type="ChEBI" id="CHEBI:58272"/>
        <dbReference type="ChEBI" id="CHEBI:62600"/>
        <dbReference type="ChEBI" id="CHEBI:76533"/>
        <dbReference type="EC" id="2.4.1.266"/>
    </reaction>
</comment>
<comment type="cofactor">
    <cofactor evidence="2">
        <name>Mn(2+)</name>
        <dbReference type="ChEBI" id="CHEBI:29035"/>
    </cofactor>
    <cofactor evidence="2">
        <name>Co(2+)</name>
        <dbReference type="ChEBI" id="CHEBI:48828"/>
    </cofactor>
    <cofactor evidence="2">
        <name>Mg(2+)</name>
        <dbReference type="ChEBI" id="CHEBI:18420"/>
    </cofactor>
    <text evidence="2">Requires divalent cations for activity in the following order of efficiency: Mn(2+), Co(2+) and Mg(2+) ions.</text>
</comment>
<comment type="biophysicochemical properties">
    <kinetics>
        <KM evidence="2">0.54 mM for 3-PGA (at 30 degrees Celsius)</KM>
        <KM evidence="2">1.6 mM for 3-PGA (at 50 degrees Celsius)</KM>
        <KM evidence="2">1.75 mM for GDP-glucose (at 30 degrees Celsius)</KM>
        <KM evidence="2">3.7 mM for GDP-glucose (at 50 degrees Celsius)</KM>
    </kinetics>
    <phDependence>
        <text evidence="2">Optimum pH is 7.5-8.5.</text>
    </phDependence>
    <temperatureDependence>
        <text evidence="2">Optimum temperature is 50 degrees Celsius.</text>
    </temperatureDependence>
</comment>
<comment type="similarity">
    <text evidence="4">Belongs to the glycosyltransferase 2 family.</text>
</comment>
<dbReference type="EC" id="2.4.1.266" evidence="2"/>
<dbReference type="EMBL" id="CP000300">
    <property type="protein sequence ID" value="ABE51702.1"/>
    <property type="molecule type" value="Genomic_DNA"/>
</dbReference>
<dbReference type="RefSeq" id="WP_011498860.1">
    <property type="nucleotide sequence ID" value="NC_007955.1"/>
</dbReference>
<dbReference type="SMR" id="Q12XX4"/>
<dbReference type="STRING" id="259564.Mbur_0737"/>
<dbReference type="CAZy" id="GT81">
    <property type="family name" value="Glycosyltransferase Family 81"/>
</dbReference>
<dbReference type="GeneID" id="3996641"/>
<dbReference type="KEGG" id="mbu:Mbur_0737"/>
<dbReference type="HOGENOM" id="CLU_056498_0_0_2"/>
<dbReference type="OrthoDB" id="123709at2157"/>
<dbReference type="BRENDA" id="2.4.1.266">
    <property type="organism ID" value="9200"/>
</dbReference>
<dbReference type="Proteomes" id="UP000001979">
    <property type="component" value="Chromosome"/>
</dbReference>
<dbReference type="GO" id="GO:0016757">
    <property type="term" value="F:glycosyltransferase activity"/>
    <property type="evidence" value="ECO:0007669"/>
    <property type="project" value="UniProtKB-KW"/>
</dbReference>
<dbReference type="GO" id="GO:0046872">
    <property type="term" value="F:metal ion binding"/>
    <property type="evidence" value="ECO:0007669"/>
    <property type="project" value="UniProtKB-KW"/>
</dbReference>
<dbReference type="Gene3D" id="3.90.550.10">
    <property type="entry name" value="Spore Coat Polysaccharide Biosynthesis Protein SpsA, Chain A"/>
    <property type="match status" value="1"/>
</dbReference>
<dbReference type="InterPro" id="IPR053677">
    <property type="entry name" value="GPGS-related"/>
</dbReference>
<dbReference type="InterPro" id="IPR029044">
    <property type="entry name" value="Nucleotide-diphossugar_trans"/>
</dbReference>
<dbReference type="NCBIfam" id="NF040724">
    <property type="entry name" value="GpgS_Meth"/>
    <property type="match status" value="1"/>
</dbReference>
<dbReference type="SUPFAM" id="SSF53448">
    <property type="entry name" value="Nucleotide-diphospho-sugar transferases"/>
    <property type="match status" value="1"/>
</dbReference>
<proteinExistence type="evidence at protein level"/>
<evidence type="ECO:0000250" key="1">
    <source>
        <dbReference type="UniProtKB" id="P9WMW9"/>
    </source>
</evidence>
<evidence type="ECO:0000269" key="2">
    <source>
    </source>
</evidence>
<evidence type="ECO:0000303" key="3">
    <source>
    </source>
</evidence>
<evidence type="ECO:0000305" key="4"/>